<proteinExistence type="inferred from homology"/>
<sequence>MLERTLRVLEYNKVKEQLLEHTASSLGRDKVKHLVPSTDFEEIVEMQDTTDEAAKVIRLKGSAPLGGITDIRSNVKRAKIGSMLSPNELLDIANTMYGSRNMKRFIEDMVDNGVDLPILETHVAQIVSLYDLEKKITNCIGDGGEVVDSASDKLRGIRTQIRTAESRIREKLENMTRSSNAQKMLSDSIVTIRNERYVIPVKQEYRGVYGGIVHDQSASGQTLFIEPQVIVELNNALQEARVKEKQEIERILLMLTEEVAVEADIVLSNVEVVANLDFIFAKAFYAKRIKATKPIVNNERYMDLRQARHPLIDPEVIVPNNIMLGKDFTTIVITGPNTGGKTVTLKTVGICVLMAQSGLHIPVMDESEICVFKNIFADIGDEQSIEQSLSTFSSHMVNIVDILEKADFESLVLFDELGAGTDPQEGAALAISILDEVCNRGARVVATTHYPELKAYGYNREQVINASVEFDVNTLSPTYKLLIGVPGRSNAFEISKRLGLSDRVIEQARNHISTDTNKIENMIAKLEESQKNAERDWNEAEALRKQSEKLHRELQRQIIEFNEERDERLLKAQKEGEEKVEAAKKEAEGIIQELRQLRKAQLANVKDHELIEAKSRLEGAAPELVKKQKVNVKNTAPKQQLRAGDEVKVLTFGQKGQLLEKVSDTEWSVQIGILKMKVKESDMEYINTPKQTEKKAVATVKGRDYHVSLELDLRGERFENAMARVEKYLDDAQLASYPRVSIIHGKGTGALRQGVQDYLKKHRGVKTFRYGDMGEGGLGVTVVELK</sequence>
<comment type="function">
    <text evidence="1">Endonuclease that is involved in the suppression of homologous recombination and thus may have a key role in the control of bacterial genetic diversity.</text>
</comment>
<comment type="function">
    <text evidence="1">Acts as a ribosome collision sensor, splitting the ribosome into its 2 subunits. Detects stalled/collided 70S ribosomes which it binds and splits by an ATP-hydrolysis driven conformational change. Acts upstream of the ribosome quality control system (RQC), a ribosome-associated complex that mediates the extraction of incompletely synthesized nascent chains from stalled ribosomes and their subsequent degradation. Probably generates substrates for RQC.</text>
</comment>
<comment type="subunit">
    <text evidence="1">Homodimer. Binds to stalled ribosomes, contacting rRNA.</text>
</comment>
<comment type="similarity">
    <text evidence="1">Belongs to the DNA mismatch repair MutS family. MutS2 subfamily.</text>
</comment>
<name>MUTS2_BACC1</name>
<organism>
    <name type="scientific">Bacillus cereus (strain ATCC 10987 / NRS 248)</name>
    <dbReference type="NCBI Taxonomy" id="222523"/>
    <lineage>
        <taxon>Bacteria</taxon>
        <taxon>Bacillati</taxon>
        <taxon>Bacillota</taxon>
        <taxon>Bacilli</taxon>
        <taxon>Bacillales</taxon>
        <taxon>Bacillaceae</taxon>
        <taxon>Bacillus</taxon>
        <taxon>Bacillus cereus group</taxon>
    </lineage>
</organism>
<gene>
    <name evidence="1" type="primary">mutS2</name>
    <name evidence="1" type="synonym">rqcU</name>
    <name type="ordered locus">BCE_4678</name>
</gene>
<reference key="1">
    <citation type="journal article" date="2004" name="Nucleic Acids Res.">
        <title>The genome sequence of Bacillus cereus ATCC 10987 reveals metabolic adaptations and a large plasmid related to Bacillus anthracis pXO1.</title>
        <authorList>
            <person name="Rasko D.A."/>
            <person name="Ravel J."/>
            <person name="Oekstad O.A."/>
            <person name="Helgason E."/>
            <person name="Cer R.Z."/>
            <person name="Jiang L."/>
            <person name="Shores K.A."/>
            <person name="Fouts D.E."/>
            <person name="Tourasse N.J."/>
            <person name="Angiuoli S.V."/>
            <person name="Kolonay J.F."/>
            <person name="Nelson W.C."/>
            <person name="Kolstoe A.-B."/>
            <person name="Fraser C.M."/>
            <person name="Read T.D."/>
        </authorList>
    </citation>
    <scope>NUCLEOTIDE SEQUENCE [LARGE SCALE GENOMIC DNA]</scope>
    <source>
        <strain>ATCC 10987 / NRS 248</strain>
    </source>
</reference>
<dbReference type="EC" id="3.1.-.-" evidence="1"/>
<dbReference type="EC" id="3.6.4.-" evidence="1"/>
<dbReference type="EMBL" id="AE017194">
    <property type="protein sequence ID" value="AAS43579.1"/>
    <property type="molecule type" value="Genomic_DNA"/>
</dbReference>
<dbReference type="SMR" id="Q72ZJ0"/>
<dbReference type="KEGG" id="bca:BCE_4678"/>
<dbReference type="HOGENOM" id="CLU_011252_2_1_9"/>
<dbReference type="Proteomes" id="UP000002527">
    <property type="component" value="Chromosome"/>
</dbReference>
<dbReference type="GO" id="GO:0005524">
    <property type="term" value="F:ATP binding"/>
    <property type="evidence" value="ECO:0007669"/>
    <property type="project" value="UniProtKB-UniRule"/>
</dbReference>
<dbReference type="GO" id="GO:0016887">
    <property type="term" value="F:ATP hydrolysis activity"/>
    <property type="evidence" value="ECO:0007669"/>
    <property type="project" value="InterPro"/>
</dbReference>
<dbReference type="GO" id="GO:0140664">
    <property type="term" value="F:ATP-dependent DNA damage sensor activity"/>
    <property type="evidence" value="ECO:0007669"/>
    <property type="project" value="InterPro"/>
</dbReference>
<dbReference type="GO" id="GO:0004519">
    <property type="term" value="F:endonuclease activity"/>
    <property type="evidence" value="ECO:0007669"/>
    <property type="project" value="UniProtKB-UniRule"/>
</dbReference>
<dbReference type="GO" id="GO:0030983">
    <property type="term" value="F:mismatched DNA binding"/>
    <property type="evidence" value="ECO:0007669"/>
    <property type="project" value="InterPro"/>
</dbReference>
<dbReference type="GO" id="GO:0043023">
    <property type="term" value="F:ribosomal large subunit binding"/>
    <property type="evidence" value="ECO:0007669"/>
    <property type="project" value="UniProtKB-UniRule"/>
</dbReference>
<dbReference type="GO" id="GO:0019843">
    <property type="term" value="F:rRNA binding"/>
    <property type="evidence" value="ECO:0007669"/>
    <property type="project" value="UniProtKB-UniRule"/>
</dbReference>
<dbReference type="GO" id="GO:0006298">
    <property type="term" value="P:mismatch repair"/>
    <property type="evidence" value="ECO:0007669"/>
    <property type="project" value="InterPro"/>
</dbReference>
<dbReference type="GO" id="GO:0045910">
    <property type="term" value="P:negative regulation of DNA recombination"/>
    <property type="evidence" value="ECO:0007669"/>
    <property type="project" value="InterPro"/>
</dbReference>
<dbReference type="GO" id="GO:0072344">
    <property type="term" value="P:rescue of stalled ribosome"/>
    <property type="evidence" value="ECO:0007669"/>
    <property type="project" value="UniProtKB-UniRule"/>
</dbReference>
<dbReference type="CDD" id="cd03280">
    <property type="entry name" value="ABC_MutS2"/>
    <property type="match status" value="1"/>
</dbReference>
<dbReference type="CDD" id="cd06503">
    <property type="entry name" value="ATP-synt_Fo_b"/>
    <property type="match status" value="1"/>
</dbReference>
<dbReference type="FunFam" id="3.40.50.300:FF:000830">
    <property type="entry name" value="Endonuclease MutS2"/>
    <property type="match status" value="1"/>
</dbReference>
<dbReference type="Gene3D" id="1.10.1420.10">
    <property type="match status" value="2"/>
</dbReference>
<dbReference type="Gene3D" id="3.30.1370.110">
    <property type="match status" value="1"/>
</dbReference>
<dbReference type="Gene3D" id="3.40.50.300">
    <property type="entry name" value="P-loop containing nucleotide triphosphate hydrolases"/>
    <property type="match status" value="1"/>
</dbReference>
<dbReference type="HAMAP" id="MF_00092">
    <property type="entry name" value="MutS2"/>
    <property type="match status" value="1"/>
</dbReference>
<dbReference type="InterPro" id="IPR000432">
    <property type="entry name" value="DNA_mismatch_repair_MutS_C"/>
</dbReference>
<dbReference type="InterPro" id="IPR007696">
    <property type="entry name" value="DNA_mismatch_repair_MutS_core"/>
</dbReference>
<dbReference type="InterPro" id="IPR036187">
    <property type="entry name" value="DNA_mismatch_repair_MutS_sf"/>
</dbReference>
<dbReference type="InterPro" id="IPR046893">
    <property type="entry name" value="MSSS"/>
</dbReference>
<dbReference type="InterPro" id="IPR045076">
    <property type="entry name" value="MutS"/>
</dbReference>
<dbReference type="InterPro" id="IPR005747">
    <property type="entry name" value="MutS2"/>
</dbReference>
<dbReference type="InterPro" id="IPR027417">
    <property type="entry name" value="P-loop_NTPase"/>
</dbReference>
<dbReference type="InterPro" id="IPR002625">
    <property type="entry name" value="Smr_dom"/>
</dbReference>
<dbReference type="InterPro" id="IPR036063">
    <property type="entry name" value="Smr_dom_sf"/>
</dbReference>
<dbReference type="NCBIfam" id="TIGR01069">
    <property type="entry name" value="mutS2"/>
    <property type="match status" value="1"/>
</dbReference>
<dbReference type="PANTHER" id="PTHR48466:SF2">
    <property type="entry name" value="OS10G0509000 PROTEIN"/>
    <property type="match status" value="1"/>
</dbReference>
<dbReference type="PANTHER" id="PTHR48466">
    <property type="entry name" value="OS10G0509000 PROTEIN-RELATED"/>
    <property type="match status" value="1"/>
</dbReference>
<dbReference type="Pfam" id="PF20297">
    <property type="entry name" value="MSSS"/>
    <property type="match status" value="1"/>
</dbReference>
<dbReference type="Pfam" id="PF00488">
    <property type="entry name" value="MutS_V"/>
    <property type="match status" value="1"/>
</dbReference>
<dbReference type="Pfam" id="PF01713">
    <property type="entry name" value="Smr"/>
    <property type="match status" value="1"/>
</dbReference>
<dbReference type="PIRSF" id="PIRSF005814">
    <property type="entry name" value="MutS_YshD"/>
    <property type="match status" value="1"/>
</dbReference>
<dbReference type="SMART" id="SM00534">
    <property type="entry name" value="MUTSac"/>
    <property type="match status" value="1"/>
</dbReference>
<dbReference type="SMART" id="SM00533">
    <property type="entry name" value="MUTSd"/>
    <property type="match status" value="1"/>
</dbReference>
<dbReference type="SMART" id="SM00463">
    <property type="entry name" value="SMR"/>
    <property type="match status" value="1"/>
</dbReference>
<dbReference type="SUPFAM" id="SSF48334">
    <property type="entry name" value="DNA repair protein MutS, domain III"/>
    <property type="match status" value="1"/>
</dbReference>
<dbReference type="SUPFAM" id="SSF52540">
    <property type="entry name" value="P-loop containing nucleoside triphosphate hydrolases"/>
    <property type="match status" value="1"/>
</dbReference>
<dbReference type="SUPFAM" id="SSF160443">
    <property type="entry name" value="SMR domain-like"/>
    <property type="match status" value="1"/>
</dbReference>
<dbReference type="PROSITE" id="PS00486">
    <property type="entry name" value="DNA_MISMATCH_REPAIR_2"/>
    <property type="match status" value="1"/>
</dbReference>
<dbReference type="PROSITE" id="PS50828">
    <property type="entry name" value="SMR"/>
    <property type="match status" value="1"/>
</dbReference>
<evidence type="ECO:0000255" key="1">
    <source>
        <dbReference type="HAMAP-Rule" id="MF_00092"/>
    </source>
</evidence>
<keyword id="KW-0067">ATP-binding</keyword>
<keyword id="KW-0238">DNA-binding</keyword>
<keyword id="KW-0255">Endonuclease</keyword>
<keyword id="KW-0378">Hydrolase</keyword>
<keyword id="KW-0540">Nuclease</keyword>
<keyword id="KW-0547">Nucleotide-binding</keyword>
<keyword id="KW-0694">RNA-binding</keyword>
<keyword id="KW-0699">rRNA-binding</keyword>
<accession>Q72ZJ0</accession>
<feature type="chain" id="PRO_1000075468" description="Endonuclease MutS2">
    <location>
        <begin position="1"/>
        <end position="786"/>
    </location>
</feature>
<feature type="domain" description="Smr" evidence="1">
    <location>
        <begin position="711"/>
        <end position="786"/>
    </location>
</feature>
<feature type="binding site" evidence="1">
    <location>
        <begin position="335"/>
        <end position="342"/>
    </location>
    <ligand>
        <name>ATP</name>
        <dbReference type="ChEBI" id="CHEBI:30616"/>
    </ligand>
</feature>
<protein>
    <recommendedName>
        <fullName evidence="1">Endonuclease MutS2</fullName>
        <ecNumber evidence="1">3.1.-.-</ecNumber>
    </recommendedName>
    <alternativeName>
        <fullName evidence="1">Ribosome-associated protein quality control-upstream factor</fullName>
        <shortName evidence="1">RQC-upstream factor</shortName>
        <shortName evidence="1">RqcU</shortName>
        <ecNumber evidence="1">3.6.4.-</ecNumber>
    </alternativeName>
</protein>